<feature type="signal peptide" evidence="2">
    <location>
        <begin position="1"/>
        <end position="23"/>
    </location>
</feature>
<feature type="chain" id="PRO_0000289650" description="WAP four-disulfide core domain protein 12">
    <location>
        <begin position="24"/>
        <end position="148"/>
    </location>
</feature>
<feature type="domain" description="WAP" evidence="3">
    <location>
        <begin position="27"/>
        <end position="74"/>
    </location>
</feature>
<feature type="region of interest" description="Disordered" evidence="4">
    <location>
        <begin position="74"/>
        <end position="148"/>
    </location>
</feature>
<feature type="disulfide bond" evidence="3">
    <location>
        <begin position="34"/>
        <end position="62"/>
    </location>
</feature>
<feature type="disulfide bond" evidence="3">
    <location>
        <begin position="41"/>
        <end position="66"/>
    </location>
</feature>
<feature type="disulfide bond" evidence="3">
    <location>
        <begin position="49"/>
        <end position="61"/>
    </location>
</feature>
<feature type="disulfide bond" evidence="3">
    <location>
        <begin position="55"/>
        <end position="70"/>
    </location>
</feature>
<comment type="function">
    <text evidence="1">Antibacterial protein. Putative acid-stable proteinase inhibitor (By similarity).</text>
</comment>
<comment type="subcellular location">
    <subcellularLocation>
        <location evidence="5">Secreted</location>
    </subcellularLocation>
</comment>
<sequence length="148" mass="15826">MRSYSFWFLTAFLVFATLALGEAVKGGKEKWGNCPAEKGSCIKSGPSQCHADNDCPGDKKCCFLSCSFKCVSPDRIRKEGGNEDEDVSRSSPEPGGEPRPPGSSPSTSILSYYAVSFPPPGIGQMAPVPQGAESWNVGQEASPQKEWS</sequence>
<accession>A4K2S4</accession>
<name>WFD12_LEMCA</name>
<proteinExistence type="inferred from homology"/>
<evidence type="ECO:0000250" key="1"/>
<evidence type="ECO:0000255" key="2"/>
<evidence type="ECO:0000255" key="3">
    <source>
        <dbReference type="PROSITE-ProRule" id="PRU00722"/>
    </source>
</evidence>
<evidence type="ECO:0000256" key="4">
    <source>
        <dbReference type="SAM" id="MobiDB-lite"/>
    </source>
</evidence>
<evidence type="ECO:0000305" key="5"/>
<organism>
    <name type="scientific">Lemur catta</name>
    <name type="common">Ring-tailed lemur</name>
    <dbReference type="NCBI Taxonomy" id="9447"/>
    <lineage>
        <taxon>Eukaryota</taxon>
        <taxon>Metazoa</taxon>
        <taxon>Chordata</taxon>
        <taxon>Craniata</taxon>
        <taxon>Vertebrata</taxon>
        <taxon>Euteleostomi</taxon>
        <taxon>Mammalia</taxon>
        <taxon>Eutheria</taxon>
        <taxon>Euarchontoglires</taxon>
        <taxon>Primates</taxon>
        <taxon>Strepsirrhini</taxon>
        <taxon>Lemuriformes</taxon>
        <taxon>Lemuridae</taxon>
        <taxon>Lemur</taxon>
    </lineage>
</organism>
<dbReference type="EMBL" id="DP000042">
    <property type="protein sequence ID" value="ABO52959.1"/>
    <property type="molecule type" value="Genomic_DNA"/>
</dbReference>
<dbReference type="MEROPS" id="I17.003"/>
<dbReference type="GO" id="GO:0005576">
    <property type="term" value="C:extracellular region"/>
    <property type="evidence" value="ECO:0007669"/>
    <property type="project" value="UniProtKB-SubCell"/>
</dbReference>
<dbReference type="GO" id="GO:0004867">
    <property type="term" value="F:serine-type endopeptidase inhibitor activity"/>
    <property type="evidence" value="ECO:0007669"/>
    <property type="project" value="UniProtKB-KW"/>
</dbReference>
<dbReference type="GO" id="GO:0042742">
    <property type="term" value="P:defense response to bacterium"/>
    <property type="evidence" value="ECO:0007669"/>
    <property type="project" value="UniProtKB-KW"/>
</dbReference>
<dbReference type="CDD" id="cd00199">
    <property type="entry name" value="WAP"/>
    <property type="match status" value="1"/>
</dbReference>
<dbReference type="Gene3D" id="4.10.75.10">
    <property type="entry name" value="Elafin-like"/>
    <property type="match status" value="1"/>
</dbReference>
<dbReference type="InterPro" id="IPR036645">
    <property type="entry name" value="Elafin-like_sf"/>
</dbReference>
<dbReference type="InterPro" id="IPR008197">
    <property type="entry name" value="WAP_dom"/>
</dbReference>
<dbReference type="Pfam" id="PF00095">
    <property type="entry name" value="WAP"/>
    <property type="match status" value="1"/>
</dbReference>
<dbReference type="PRINTS" id="PR00003">
    <property type="entry name" value="4DISULPHCORE"/>
</dbReference>
<dbReference type="SMART" id="SM00217">
    <property type="entry name" value="WAP"/>
    <property type="match status" value="1"/>
</dbReference>
<dbReference type="SUPFAM" id="SSF57256">
    <property type="entry name" value="Elafin-like"/>
    <property type="match status" value="1"/>
</dbReference>
<dbReference type="PROSITE" id="PS51390">
    <property type="entry name" value="WAP"/>
    <property type="match status" value="1"/>
</dbReference>
<gene>
    <name type="primary">WFDC12</name>
</gene>
<protein>
    <recommendedName>
        <fullName>WAP four-disulfide core domain protein 12</fullName>
    </recommendedName>
</protein>
<reference key="1">
    <citation type="journal article" date="2007" name="Genome Res.">
        <title>Comparative sequence analyses reveal rapid and divergent evolutionary changes of the WFDC locus in the primate lineage.</title>
        <authorList>
            <consortium name="NISC comparative sequencing program"/>
            <person name="Hurle B."/>
            <person name="Swanson W."/>
            <person name="Green E.D."/>
        </authorList>
    </citation>
    <scope>NUCLEOTIDE SEQUENCE [GENOMIC DNA]</scope>
</reference>
<keyword id="KW-0044">Antibiotic</keyword>
<keyword id="KW-0929">Antimicrobial</keyword>
<keyword id="KW-1015">Disulfide bond</keyword>
<keyword id="KW-0646">Protease inhibitor</keyword>
<keyword id="KW-0964">Secreted</keyword>
<keyword id="KW-0722">Serine protease inhibitor</keyword>
<keyword id="KW-0732">Signal</keyword>